<evidence type="ECO:0000255" key="1">
    <source>
        <dbReference type="HAMAP-Rule" id="MF_00906"/>
    </source>
</evidence>
<comment type="function">
    <text evidence="1">Contributes to the efficiency of the cell division process by stabilizing the polymeric form of the cell division protein FtsZ. Acts by promoting interactions between FtsZ protofilaments and suppressing the GTPase activity of FtsZ.</text>
</comment>
<comment type="subunit">
    <text evidence="1">Interacts directly with FtsZ.</text>
</comment>
<comment type="subcellular location">
    <subcellularLocation>
        <location evidence="1">Cytoplasm</location>
    </subcellularLocation>
</comment>
<comment type="similarity">
    <text evidence="1">Belongs to the ZapC family.</text>
</comment>
<gene>
    <name evidence="1" type="primary">zapC</name>
    <name type="ordered locus">SO_2591</name>
</gene>
<accession>Q8EDZ9</accession>
<sequence length="177" mass="19859">MLLLPQKDWHWKYNDSYGVLSVSLGSEIEFLTAYKAKSLIPDALSSMEFNISHAKFYMSLLDKLPKTLTLTDAAVVQIALNATAAHFMLTPQMPKSWFFDTSEVCVYSDVGKVFELKCQKQRALVLVVENTLQSALVMLLSPECVLSGAKTLGQFETIKVMHNRLHPLRAQRHVVAA</sequence>
<name>ZAPC_SHEON</name>
<proteinExistence type="inferred from homology"/>
<organism>
    <name type="scientific">Shewanella oneidensis (strain ATCC 700550 / JCM 31522 / CIP 106686 / LMG 19005 / NCIMB 14063 / MR-1)</name>
    <dbReference type="NCBI Taxonomy" id="211586"/>
    <lineage>
        <taxon>Bacteria</taxon>
        <taxon>Pseudomonadati</taxon>
        <taxon>Pseudomonadota</taxon>
        <taxon>Gammaproteobacteria</taxon>
        <taxon>Alteromonadales</taxon>
        <taxon>Shewanellaceae</taxon>
        <taxon>Shewanella</taxon>
    </lineage>
</organism>
<feature type="chain" id="PRO_0000413788" description="Cell division protein ZapC">
    <location>
        <begin position="1"/>
        <end position="177"/>
    </location>
</feature>
<dbReference type="EMBL" id="AE014299">
    <property type="protein sequence ID" value="AAN55621.1"/>
    <property type="molecule type" value="Genomic_DNA"/>
</dbReference>
<dbReference type="RefSeq" id="NP_718177.1">
    <property type="nucleotide sequence ID" value="NC_004347.2"/>
</dbReference>
<dbReference type="RefSeq" id="WP_011072541.1">
    <property type="nucleotide sequence ID" value="NC_004347.2"/>
</dbReference>
<dbReference type="SMR" id="Q8EDZ9"/>
<dbReference type="STRING" id="211586.SO_2591"/>
<dbReference type="PaxDb" id="211586-SO_2591"/>
<dbReference type="DNASU" id="1170293"/>
<dbReference type="KEGG" id="son:SO_2591"/>
<dbReference type="PATRIC" id="fig|211586.12.peg.2494"/>
<dbReference type="eggNOG" id="ENOG502Z8AH">
    <property type="taxonomic scope" value="Bacteria"/>
</dbReference>
<dbReference type="HOGENOM" id="CLU_128248_0_0_6"/>
<dbReference type="OrthoDB" id="5765005at2"/>
<dbReference type="PhylomeDB" id="Q8EDZ9"/>
<dbReference type="BioCyc" id="SONE211586:G1GMP-2376-MONOMER"/>
<dbReference type="Proteomes" id="UP000008186">
    <property type="component" value="Chromosome"/>
</dbReference>
<dbReference type="GO" id="GO:0005737">
    <property type="term" value="C:cytoplasm"/>
    <property type="evidence" value="ECO:0007669"/>
    <property type="project" value="UniProtKB-SubCell"/>
</dbReference>
<dbReference type="GO" id="GO:0000917">
    <property type="term" value="P:division septum assembly"/>
    <property type="evidence" value="ECO:0007669"/>
    <property type="project" value="UniProtKB-KW"/>
</dbReference>
<dbReference type="GO" id="GO:0043093">
    <property type="term" value="P:FtsZ-dependent cytokinesis"/>
    <property type="evidence" value="ECO:0007669"/>
    <property type="project" value="UniProtKB-UniRule"/>
</dbReference>
<dbReference type="HAMAP" id="MF_00906">
    <property type="entry name" value="ZapC"/>
    <property type="match status" value="1"/>
</dbReference>
<dbReference type="InterPro" id="IPR009809">
    <property type="entry name" value="ZapC"/>
</dbReference>
<dbReference type="InterPro" id="IPR048372">
    <property type="entry name" value="ZapC_C"/>
</dbReference>
<dbReference type="InterPro" id="IPR048373">
    <property type="entry name" value="ZapC_N"/>
</dbReference>
<dbReference type="Pfam" id="PF07126">
    <property type="entry name" value="ZapC_C"/>
    <property type="match status" value="1"/>
</dbReference>
<dbReference type="Pfam" id="PF21083">
    <property type="entry name" value="ZapC_N"/>
    <property type="match status" value="1"/>
</dbReference>
<dbReference type="PIRSF" id="PIRSF010252">
    <property type="entry name" value="ZapC"/>
    <property type="match status" value="1"/>
</dbReference>
<protein>
    <recommendedName>
        <fullName evidence="1">Cell division protein ZapC</fullName>
    </recommendedName>
</protein>
<keyword id="KW-0131">Cell cycle</keyword>
<keyword id="KW-0132">Cell division</keyword>
<keyword id="KW-0963">Cytoplasm</keyword>
<keyword id="KW-1185">Reference proteome</keyword>
<keyword id="KW-0717">Septation</keyword>
<reference key="1">
    <citation type="journal article" date="2002" name="Nat. Biotechnol.">
        <title>Genome sequence of the dissimilatory metal ion-reducing bacterium Shewanella oneidensis.</title>
        <authorList>
            <person name="Heidelberg J.F."/>
            <person name="Paulsen I.T."/>
            <person name="Nelson K.E."/>
            <person name="Gaidos E.J."/>
            <person name="Nelson W.C."/>
            <person name="Read T.D."/>
            <person name="Eisen J.A."/>
            <person name="Seshadri R."/>
            <person name="Ward N.L."/>
            <person name="Methe B.A."/>
            <person name="Clayton R.A."/>
            <person name="Meyer T."/>
            <person name="Tsapin A."/>
            <person name="Scott J."/>
            <person name="Beanan M.J."/>
            <person name="Brinkac L.M."/>
            <person name="Daugherty S.C."/>
            <person name="DeBoy R.T."/>
            <person name="Dodson R.J."/>
            <person name="Durkin A.S."/>
            <person name="Haft D.H."/>
            <person name="Kolonay J.F."/>
            <person name="Madupu R."/>
            <person name="Peterson J.D."/>
            <person name="Umayam L.A."/>
            <person name="White O."/>
            <person name="Wolf A.M."/>
            <person name="Vamathevan J.J."/>
            <person name="Weidman J.F."/>
            <person name="Impraim M."/>
            <person name="Lee K."/>
            <person name="Berry K.J."/>
            <person name="Lee C."/>
            <person name="Mueller J."/>
            <person name="Khouri H.M."/>
            <person name="Gill J."/>
            <person name="Utterback T.R."/>
            <person name="McDonald L.A."/>
            <person name="Feldblyum T.V."/>
            <person name="Smith H.O."/>
            <person name="Venter J.C."/>
            <person name="Nealson K.H."/>
            <person name="Fraser C.M."/>
        </authorList>
    </citation>
    <scope>NUCLEOTIDE SEQUENCE [LARGE SCALE GENOMIC DNA]</scope>
    <source>
        <strain>ATCC 700550 / JCM 31522 / CIP 106686 / LMG 19005 / NCIMB 14063 / MR-1</strain>
    </source>
</reference>